<gene>
    <name evidence="10 15" type="primary">gelE</name>
    <name type="ordered locus">EF_1818</name>
</gene>
<protein>
    <recommendedName>
        <fullName evidence="10 16">Gelatinase</fullName>
        <ecNumber>3.4.24.30</ecNumber>
    </recommendedName>
    <alternativeName>
        <fullName evidence="11 14">Coccolysin</fullName>
    </alternativeName>
</protein>
<sequence>MMKGNKILYILGTGIFVGSSCLFSSLFVAAEEQVYSESEVSTVLSKLEKEAISEAAAEQYTVVDRKEDAWGMKHLKLEKQTEGVTVDSDNVIIHLDRNGAVTSVTGNPVDQVVKIQSVDAIGEEGVKKIIASDNPETKDLVFLAIDKRVNNEGQLFYKVRVTSSPTGDPVSLVYKVNATDGTIMEKQDLTEHVGSEVTLKNSFQVAFNVPVEKSNTGIALHGTDNTGVYHAVVDGKNNYSIIQAPSLVALNQNAVDAYTHGKFVKTYYEDHFQRHSIDDRGMPILSVVDEQHPDAYDNAFWDGKAMRYGETSTPTGKTYASSLDVVGHEMTHGVTEHTAGLEYLGQSGALNESYSDLMGYIISGASNPEIGADTQSVDRKTGIRNLQTPSKHGQPETMAQYDDRARYKGTPYYDQGGVHYNSGIINRIGYTIIQNLGIEKAQTIFYSSLVNYLTPKAQFSDARDAMLAAAKVQYGDEAASVVSAAFNSAGIGAKEDIQVNQPSESVLVNE</sequence>
<reference evidence="12 13" key="1">
    <citation type="journal article" date="1991" name="Infect. Immun.">
        <title>Nucleotide sequence of the gelatinase gene (gelE) from Enterococcus faecalis subsp. liquefaciens.</title>
        <authorList>
            <person name="Su Y.A."/>
            <person name="Sulavik M.C."/>
            <person name="He P."/>
            <person name="Makinen K.K."/>
            <person name="Makinen P.L."/>
            <person name="Fiedler S."/>
            <person name="Wirth R."/>
            <person name="Clewell D.B."/>
        </authorList>
    </citation>
    <scope>NUCLEOTIDE SEQUENCE [GENOMIC DNA]</scope>
    <scope>PROTEIN SEQUENCE OF 193-200</scope>
    <source>
        <strain evidence="6">OG1-10</strain>
    </source>
</reference>
<reference evidence="12 17" key="2">
    <citation type="journal article" date="1999" name="J. Biosci. Bioeng.">
        <title>Determination of nucleotide sequence related to the plasmid replication region in Enterococcus faecalis and its application to a new shuttle vector.</title>
        <authorList>
            <person name="Kirimura K."/>
            <person name="Kamigaki K."/>
            <person name="Ebihara T."/>
            <person name="Ishii Y."/>
            <person name="Kanayama S."/>
            <person name="Usami S."/>
        </authorList>
    </citation>
    <scope>NUCLEOTIDE SEQUENCE [GENOMIC DNA]</scope>
    <source>
        <strain>ATCC 23655 / NBRC 3989 / NCDO 592</strain>
    </source>
</reference>
<reference evidence="12 15" key="3">
    <citation type="journal article" date="2007" name="Infect. Immun.">
        <title>Extracellular gelatinase of Enterococcus faecalis destroys a defense system in insect hemolymph and human serum.</title>
        <authorList>
            <person name="Park S.Y."/>
            <person name="Kim K.M."/>
            <person name="Lee J.H."/>
            <person name="Seo S.J."/>
            <person name="Lee I.H."/>
        </authorList>
    </citation>
    <scope>NUCLEOTIDE SEQUENCE [GENOMIC DNA]</scope>
    <scope>FUNCTION</scope>
    <scope>SUBCELLULAR LOCATION</scope>
    <source>
        <strain evidence="5">GM</strain>
    </source>
</reference>
<reference evidence="14" key="4">
    <citation type="journal article" date="2003" name="Science">
        <title>Role of mobile DNA in the evolution of vancomycin-resistant Enterococcus faecalis.</title>
        <authorList>
            <person name="Paulsen I.T."/>
            <person name="Banerjei L."/>
            <person name="Myers G.S.A."/>
            <person name="Nelson K.E."/>
            <person name="Seshadri R."/>
            <person name="Read T.D."/>
            <person name="Fouts D.E."/>
            <person name="Eisen J.A."/>
            <person name="Gill S.R."/>
            <person name="Heidelberg J.F."/>
            <person name="Tettelin H."/>
            <person name="Dodson R.J."/>
            <person name="Umayam L.A."/>
            <person name="Brinkac L.M."/>
            <person name="Beanan M.J."/>
            <person name="Daugherty S.C."/>
            <person name="DeBoy R.T."/>
            <person name="Durkin S.A."/>
            <person name="Kolonay J.F."/>
            <person name="Madupu R."/>
            <person name="Nelson W.C."/>
            <person name="Vamathevan J.J."/>
            <person name="Tran B."/>
            <person name="Upton J."/>
            <person name="Hansen T."/>
            <person name="Shetty J."/>
            <person name="Khouri H.M."/>
            <person name="Utterback T.R."/>
            <person name="Radune D."/>
            <person name="Ketchum K.A."/>
            <person name="Dougherty B.A."/>
            <person name="Fraser C.M."/>
        </authorList>
    </citation>
    <scope>NUCLEOTIDE SEQUENCE [LARGE SCALE GENOMIC DNA]</scope>
    <source>
        <strain>ATCC 700802 / V583</strain>
    </source>
</reference>
<reference evidence="12 16" key="5">
    <citation type="journal article" date="2009" name="Environ. Microbiol.">
        <title>Enterococcus faecalis with the gelatinase phenotype regulated by the fsr operon and with biofilm-forming capacity are common in the agricultural environment.</title>
        <authorList>
            <person name="Macovei L."/>
            <person name="Ghosh A."/>
            <person name="Thomas V.C."/>
            <person name="Hancock L.E."/>
            <person name="Mahmood S."/>
            <person name="Zurek L."/>
        </authorList>
    </citation>
    <scope>NUCLEOTIDE SEQUENCE [GENOMIC DNA] OF 1-502</scope>
    <source>
        <strain evidence="16">H81</strain>
    </source>
</reference>
<reference evidence="12" key="6">
    <citation type="journal article" date="1989" name="J. Biol. Chem.">
        <title>Purification and substrate specificity of a strongly hydrophobic extracellular metalloendopeptidase ('gelatinase') from Streptococcus faecalis (strain 0G1-10).</title>
        <authorList>
            <person name="Makinen P.L."/>
            <person name="Clewell D.B."/>
            <person name="An F."/>
            <person name="Makinen K.K."/>
        </authorList>
    </citation>
    <scope>FUNCTION</scope>
    <scope>CATALYTIC ACTIVITY</scope>
    <scope>ACTIVITY REGULATION</scope>
    <scope>BIOPHYSICOCHEMICAL PROPERTIES</scope>
</reference>
<reference evidence="12" key="7">
    <citation type="journal article" date="1994" name="Biochem. Biophys. Res. Commun.">
        <title>The Enterococcus faecalis extracellular metalloendopeptidase (EC 3.4.24.30; coccolysin) inactivates human endothelin at bonds involving hydrophobic amino acid residues.</title>
        <authorList>
            <person name="Makinen P.L."/>
            <person name="Makinen K.K."/>
        </authorList>
    </citation>
    <scope>FUNCTION</scope>
    <scope>CATALYTIC ACTIVITY</scope>
</reference>
<reference evidence="12" key="8">
    <citation type="journal article" date="2003" name="J. Bacteriol.">
        <title>Role of the Enterococcus faecalis GelE protease in determination of cellular chain length, supernatant pheromone levels, and degradation of fibrin and misfolded surface proteins.</title>
        <authorList>
            <person name="Waters C.M."/>
            <person name="Antiporta M.H."/>
            <person name="Murray B.E."/>
            <person name="Dunny G.M."/>
        </authorList>
    </citation>
    <scope>FUNCTION</scope>
</reference>
<reference evidence="12" key="9">
    <citation type="journal article" date="2008" name="J. Immunol.">
        <title>Immune evasion of Enterococcus faecalis by an extracellular gelatinase that cleaves C3 and iC3b.</title>
        <authorList>
            <person name="Park S.Y."/>
            <person name="Shin Y.P."/>
            <person name="Kim C.H."/>
            <person name="Park H.J."/>
            <person name="Seong Y.S."/>
            <person name="Kim B.S."/>
            <person name="Seo S.J."/>
            <person name="Lee I.H."/>
        </authorList>
    </citation>
    <scope>FUNCTION</scope>
</reference>
<evidence type="ECO:0000250" key="1">
    <source>
        <dbReference type="UniProtKB" id="P81177"/>
    </source>
</evidence>
<evidence type="ECO:0000255" key="2"/>
<evidence type="ECO:0000255" key="3">
    <source>
        <dbReference type="PROSITE-ProRule" id="PRU10095"/>
    </source>
</evidence>
<evidence type="ECO:0000269" key="4">
    <source>
    </source>
</evidence>
<evidence type="ECO:0000269" key="5">
    <source>
    </source>
</evidence>
<evidence type="ECO:0000269" key="6">
    <source>
    </source>
</evidence>
<evidence type="ECO:0000269" key="7">
    <source>
    </source>
</evidence>
<evidence type="ECO:0000269" key="8">
    <source>
    </source>
</evidence>
<evidence type="ECO:0000269" key="9">
    <source>
    </source>
</evidence>
<evidence type="ECO:0000303" key="10">
    <source>
    </source>
</evidence>
<evidence type="ECO:0000303" key="11">
    <source>
    </source>
</evidence>
<evidence type="ECO:0000305" key="12"/>
<evidence type="ECO:0000312" key="13">
    <source>
        <dbReference type="EMBL" id="AAA24778.1"/>
    </source>
</evidence>
<evidence type="ECO:0000312" key="14">
    <source>
        <dbReference type="EMBL" id="AAO81586.1"/>
    </source>
</evidence>
<evidence type="ECO:0000312" key="15">
    <source>
        <dbReference type="EMBL" id="ABL10087.1"/>
    </source>
</evidence>
<evidence type="ECO:0000312" key="16">
    <source>
        <dbReference type="EMBL" id="ACF74544.2"/>
    </source>
</evidence>
<evidence type="ECO:0000312" key="17">
    <source>
        <dbReference type="EMBL" id="BAA12802.1"/>
    </source>
</evidence>
<feature type="signal peptide" evidence="2">
    <location>
        <begin position="1"/>
        <end position="30"/>
    </location>
</feature>
<feature type="propeptide" id="PRO_0000395367" evidence="2 6">
    <location>
        <begin position="31"/>
        <end position="192"/>
    </location>
</feature>
<feature type="chain" id="PRO_0000395368" description="Gelatinase" evidence="6">
    <location>
        <begin position="193"/>
        <end position="510"/>
    </location>
</feature>
<feature type="active site" evidence="1 3">
    <location>
        <position position="329"/>
    </location>
</feature>
<feature type="active site" description="Proton donor" evidence="1 3">
    <location>
        <position position="419"/>
    </location>
</feature>
<feature type="binding site" evidence="1">
    <location>
        <position position="324"/>
    </location>
    <ligand>
        <name>Ca(2+)</name>
        <dbReference type="ChEBI" id="CHEBI:29108"/>
    </ligand>
</feature>
<feature type="binding site" evidence="1 3">
    <location>
        <position position="328"/>
    </location>
    <ligand>
        <name>Zn(2+)</name>
        <dbReference type="ChEBI" id="CHEBI:29105"/>
        <note>catalytic</note>
    </ligand>
</feature>
<feature type="binding site" evidence="1 3">
    <location>
        <position position="332"/>
    </location>
    <ligand>
        <name>Zn(2+)</name>
        <dbReference type="ChEBI" id="CHEBI:29105"/>
        <note>catalytic</note>
    </ligand>
</feature>
<feature type="binding site" evidence="1 3">
    <location>
        <position position="352"/>
    </location>
    <ligand>
        <name>Zn(2+)</name>
        <dbReference type="ChEBI" id="CHEBI:29105"/>
        <note>catalytic</note>
    </ligand>
</feature>
<feature type="binding site" evidence="1">
    <location>
        <position position="376"/>
    </location>
    <ligand>
        <name>Ca(2+)</name>
        <dbReference type="ChEBI" id="CHEBI:29108"/>
    </ligand>
</feature>
<feature type="sequence conflict" description="In Ref. 5; ACF74544." evidence="12" ref="5">
    <location>
        <position position="2"/>
    </location>
</feature>
<feature type="sequence conflict" description="In Ref. 1; AAA24778, 2; BAA12802, 3; ABL10087 and 5; ACF74544." evidence="12" ref="1 2 3 5">
    <original>R</original>
    <variation>K</variation>
    <location>
        <position position="97"/>
    </location>
</feature>
<feature type="sequence conflict" description="In Ref. 1; AAA24778." evidence="12" ref="1">
    <original>I</original>
    <variation>V</variation>
    <location>
        <position position="130"/>
    </location>
</feature>
<feature type="sequence conflict" description="In Ref. 2; BAA12802." evidence="12" ref="2">
    <original>T</original>
    <variation>N</variation>
    <location>
        <position position="137"/>
    </location>
</feature>
<feature type="sequence conflict" description="In Ref. 3; ABL10087." evidence="12" ref="3">
    <original>V</original>
    <variation>F</variation>
    <location>
        <position position="159"/>
    </location>
</feature>
<feature type="sequence conflict" description="In Ref. 3; ABL10087." evidence="12" ref="3">
    <original>PT</original>
    <variation>LI</variation>
    <location>
        <begin position="165"/>
        <end position="166"/>
    </location>
</feature>
<feature type="sequence conflict" description="In Ref. 1; AAA24778, 2; BAA12802 and 3; ABL10087." evidence="12" ref="1 2 3">
    <original>A</original>
    <variation>T</variation>
    <location>
        <position position="206"/>
    </location>
</feature>
<feature type="sequence conflict" description="In Ref. 1; AAA24778, 2; BAA12802 and 3; ABL10087." evidence="12" ref="1 2 3">
    <original>VA</original>
    <variation>AT</variation>
    <location>
        <begin position="248"/>
        <end position="249"/>
    </location>
</feature>
<feature type="sequence conflict" description="In Ref. 5; ACF74544." evidence="12" ref="5">
    <original>V</original>
    <variation>A</variation>
    <location>
        <position position="248"/>
    </location>
</feature>
<feature type="sequence conflict" description="In Ref. 1; AAA24778." evidence="12" ref="1">
    <original>V</original>
    <variation>I</variation>
    <location>
        <position position="255"/>
    </location>
</feature>
<organism>
    <name type="scientific">Enterococcus faecalis (strain ATCC 700802 / V583)</name>
    <dbReference type="NCBI Taxonomy" id="226185"/>
    <lineage>
        <taxon>Bacteria</taxon>
        <taxon>Bacillati</taxon>
        <taxon>Bacillota</taxon>
        <taxon>Bacilli</taxon>
        <taxon>Lactobacillales</taxon>
        <taxon>Enterococcaceae</taxon>
        <taxon>Enterococcus</taxon>
    </lineage>
</organism>
<keyword id="KW-0106">Calcium</keyword>
<keyword id="KW-0903">Direct protein sequencing</keyword>
<keyword id="KW-0378">Hydrolase</keyword>
<keyword id="KW-0479">Metal-binding</keyword>
<keyword id="KW-0482">Metalloprotease</keyword>
<keyword id="KW-0645">Protease</keyword>
<keyword id="KW-1185">Reference proteome</keyword>
<keyword id="KW-0964">Secreted</keyword>
<keyword id="KW-0732">Signal</keyword>
<keyword id="KW-0862">Zinc</keyword>
<keyword id="KW-0865">Zymogen</keyword>
<comment type="function">
    <text evidence="4 5 7 8 9">Metalloprotease capable of the hydrolysis of insoluble hydrophobic substrates. Hydrolyzes azocoll and gelatin and, at a lower rate, soluble and insoluble collagens. Does not cleave short synthetic peptides. Preferentially hydrolyzes the 24-Phe-|-Phe-25 bond in the insulin B-chain, followed by the 5-His-|-Leu-6 bond. Inactivates endothelin-1, primarily by cleavage of the 5-Ser-|-Leu-6 and 16-His-|-Leu-17 bonds. Hydrolyzes the alpha chain of C3 to generate a C3b-like protein. Inhibits complement-mediated hemolysis and opsinization of bacteria. Hydrolyzes the insect antimicrobial peptide cecropin. Decreases the length of E.faecalis chains via the activation of autolysin. Degrades polymerized fibrin.</text>
</comment>
<comment type="catalytic activity">
    <reaction evidence="8 9">
        <text>Preferential cleavage: Xaa-|-Leu, Xaa-|-Phe, Xaa-|-Tyr, Xaa-|-Ala.</text>
        <dbReference type="EC" id="3.4.24.30"/>
    </reaction>
</comment>
<comment type="activity regulation">
    <text evidence="8">Inhibited by L-leucine hydroxamate and phosphoramidon. Not inhibited by phenylmethanesulfonyl fluoride. Reversibly inactivated by straight-chain aliphatic alcohols.</text>
</comment>
<comment type="biophysicochemical properties">
    <phDependence>
        <text evidence="8">Optimum pH is 7.2. Active from pH 6.0-8.0, activity decreases rapidly at more acidic pH values. Stable only above pH 5.6.</text>
    </phDependence>
</comment>
<comment type="subcellular location">
    <subcellularLocation>
        <location evidence="5">Secreted</location>
    </subcellularLocation>
</comment>
<comment type="similarity">
    <text evidence="2">Belongs to the peptidase M4 family.</text>
</comment>
<comment type="sequence caution" evidence="12">
    <conflict type="erroneous initiation">
        <sequence resource="EMBL-CDS" id="AAA24778"/>
    </conflict>
    <text>Truncated N-terminus.</text>
</comment>
<comment type="sequence caution" evidence="12">
    <conflict type="erroneous initiation">
        <sequence resource="EMBL-CDS" id="ABL10087"/>
    </conflict>
    <text>Truncated N-terminus.</text>
</comment>
<comment type="sequence caution" evidence="12">
    <conflict type="erroneous initiation">
        <sequence resource="EMBL-CDS" id="BAA12802"/>
    </conflict>
    <text>Truncated N-terminus.</text>
</comment>
<dbReference type="EC" id="3.4.24.30"/>
<dbReference type="EMBL" id="M37185">
    <property type="protein sequence ID" value="AAA24778.1"/>
    <property type="status" value="ALT_INIT"/>
    <property type="molecule type" value="Genomic_DNA"/>
</dbReference>
<dbReference type="EMBL" id="D85393">
    <property type="protein sequence ID" value="BAA12802.1"/>
    <property type="status" value="ALT_INIT"/>
    <property type="molecule type" value="Genomic_DNA"/>
</dbReference>
<dbReference type="EMBL" id="EF105504">
    <property type="protein sequence ID" value="ABL10087.1"/>
    <property type="status" value="ALT_INIT"/>
    <property type="molecule type" value="Genomic_DNA"/>
</dbReference>
<dbReference type="EMBL" id="AE016830">
    <property type="protein sequence ID" value="AAO81586.1"/>
    <property type="molecule type" value="Genomic_DNA"/>
</dbReference>
<dbReference type="EMBL" id="EU862241">
    <property type="protein sequence ID" value="ACF74544.2"/>
    <property type="molecule type" value="Genomic_DNA"/>
</dbReference>
<dbReference type="PIR" id="A43580">
    <property type="entry name" value="A43580"/>
</dbReference>
<dbReference type="RefSeq" id="NP_815516.1">
    <property type="nucleotide sequence ID" value="NC_004668.1"/>
</dbReference>
<dbReference type="RefSeq" id="WP_002369251.1">
    <property type="nucleotide sequence ID" value="NZ_KE136528.1"/>
</dbReference>
<dbReference type="SMR" id="Q833V7"/>
<dbReference type="IntAct" id="Q833V7">
    <property type="interactions" value="1"/>
</dbReference>
<dbReference type="STRING" id="226185.EF_1818"/>
<dbReference type="BindingDB" id="Q833V7"/>
<dbReference type="MEROPS" id="M04.007"/>
<dbReference type="DNASU" id="1200704"/>
<dbReference type="EnsemblBacteria" id="AAO81586">
    <property type="protein sequence ID" value="AAO81586"/>
    <property type="gene ID" value="EF_1818"/>
</dbReference>
<dbReference type="KEGG" id="efa:EF1818"/>
<dbReference type="PATRIC" id="fig|226185.9.peg.1708"/>
<dbReference type="eggNOG" id="COG3227">
    <property type="taxonomic scope" value="Bacteria"/>
</dbReference>
<dbReference type="HOGENOM" id="CLU_008590_5_2_9"/>
<dbReference type="Proteomes" id="UP000001415">
    <property type="component" value="Chromosome"/>
</dbReference>
<dbReference type="GO" id="GO:0005576">
    <property type="term" value="C:extracellular region"/>
    <property type="evidence" value="ECO:0007669"/>
    <property type="project" value="UniProtKB-SubCell"/>
</dbReference>
<dbReference type="GO" id="GO:0046872">
    <property type="term" value="F:metal ion binding"/>
    <property type="evidence" value="ECO:0007669"/>
    <property type="project" value="UniProtKB-KW"/>
</dbReference>
<dbReference type="GO" id="GO:0004222">
    <property type="term" value="F:metalloendopeptidase activity"/>
    <property type="evidence" value="ECO:0007669"/>
    <property type="project" value="InterPro"/>
</dbReference>
<dbReference type="GO" id="GO:0006508">
    <property type="term" value="P:proteolysis"/>
    <property type="evidence" value="ECO:0007669"/>
    <property type="project" value="UniProtKB-KW"/>
</dbReference>
<dbReference type="CDD" id="cd09597">
    <property type="entry name" value="M4_TLP"/>
    <property type="match status" value="1"/>
</dbReference>
<dbReference type="Gene3D" id="3.10.170.10">
    <property type="match status" value="1"/>
</dbReference>
<dbReference type="Gene3D" id="3.10.450.490">
    <property type="match status" value="1"/>
</dbReference>
<dbReference type="Gene3D" id="1.10.390.10">
    <property type="entry name" value="Neutral Protease Domain 2"/>
    <property type="match status" value="1"/>
</dbReference>
<dbReference type="InterPro" id="IPR011096">
    <property type="entry name" value="FTP_domain"/>
</dbReference>
<dbReference type="InterPro" id="IPR023612">
    <property type="entry name" value="Peptidase_M4"/>
</dbReference>
<dbReference type="InterPro" id="IPR027268">
    <property type="entry name" value="Peptidase_M4/M1_CTD_sf"/>
</dbReference>
<dbReference type="InterPro" id="IPR001570">
    <property type="entry name" value="Peptidase_M4_C_domain"/>
</dbReference>
<dbReference type="InterPro" id="IPR013856">
    <property type="entry name" value="Peptidase_M4_domain"/>
</dbReference>
<dbReference type="InterPro" id="IPR050728">
    <property type="entry name" value="Zinc_Metalloprotease_M4"/>
</dbReference>
<dbReference type="PANTHER" id="PTHR33794">
    <property type="entry name" value="BACILLOLYSIN"/>
    <property type="match status" value="1"/>
</dbReference>
<dbReference type="PANTHER" id="PTHR33794:SF1">
    <property type="entry name" value="BACILLOLYSIN"/>
    <property type="match status" value="1"/>
</dbReference>
<dbReference type="Pfam" id="PF07504">
    <property type="entry name" value="FTP"/>
    <property type="match status" value="1"/>
</dbReference>
<dbReference type="Pfam" id="PF01447">
    <property type="entry name" value="Peptidase_M4"/>
    <property type="match status" value="1"/>
</dbReference>
<dbReference type="Pfam" id="PF02868">
    <property type="entry name" value="Peptidase_M4_C"/>
    <property type="match status" value="1"/>
</dbReference>
<dbReference type="PRINTS" id="PR00730">
    <property type="entry name" value="THERMOLYSIN"/>
</dbReference>
<dbReference type="SUPFAM" id="SSF55486">
    <property type="entry name" value="Metalloproteases ('zincins'), catalytic domain"/>
    <property type="match status" value="1"/>
</dbReference>
<dbReference type="PROSITE" id="PS00142">
    <property type="entry name" value="ZINC_PROTEASE"/>
    <property type="match status" value="1"/>
</dbReference>
<accession>Q833V7</accession>
<accession>A1E464</accession>
<accession>B5AN27</accession>
<accession>Q47786</accession>
<accession>Q9S385</accession>
<proteinExistence type="evidence at protein level"/>
<name>GELE_ENTFA</name>